<accession>P00768</accession>
<reference key="1">
    <citation type="journal article" date="1983" name="Biochem. Biophys. Res. Commun.">
        <title>Amino acid sequence of an insect chymotrypsin from the larvae of the hornet, Vespa orientalis.</title>
        <authorList>
            <person name="Jany K.-D."/>
            <person name="Bekelar K."/>
            <person name="Pfleiderer G."/>
            <person name="Ishay J."/>
        </authorList>
    </citation>
    <scope>PROTEIN SEQUENCE</scope>
    <scope>DISULFIDE BONDS</scope>
</reference>
<reference key="2">
    <citation type="journal article" date="1981" name="Biochim. Biophys. Acta">
        <title>The amino acid sequences around the reactive serine and histidine residues of the chymotrypsin-like protease from the hornet, Vespa orientalis.</title>
        <authorList>
            <person name="Jany K.-D."/>
            <person name="Bekelar K."/>
            <person name="Ishay J."/>
        </authorList>
    </citation>
    <scope>ACTIVE SITE</scope>
</reference>
<feature type="chain" id="PRO_0000088677" description="Chymotrypsin-2">
    <location>
        <begin position="1"/>
        <end position="216"/>
    </location>
</feature>
<feature type="domain" description="Peptidase S1" evidence="1">
    <location>
        <begin position="1"/>
        <end position="216"/>
    </location>
</feature>
<feature type="active site" description="Charge relay system" evidence="5">
    <location>
        <position position="39"/>
    </location>
</feature>
<feature type="active site" description="Charge relay system" evidence="5">
    <location>
        <position position="82"/>
    </location>
</feature>
<feature type="active site" description="Charge relay system" evidence="5">
    <location>
        <position position="173"/>
    </location>
</feature>
<feature type="disulfide bond" evidence="1 4">
    <location>
        <begin position="25"/>
        <end position="40"/>
    </location>
</feature>
<feature type="disulfide bond" evidence="1 4">
    <location>
        <begin position="146"/>
        <end position="159"/>
    </location>
</feature>
<feature type="disulfide bond" evidence="1 4">
    <location>
        <begin position="169"/>
        <end position="193"/>
    </location>
</feature>
<comment type="catalytic activity">
    <reaction evidence="2 3">
        <text>Preferential cleavage: Tyr-|-Xaa, Trp-|-Xaa, Phe-|-Xaa, Leu-|-Xaa.</text>
        <dbReference type="EC" id="3.4.21.1"/>
    </reaction>
</comment>
<comment type="subcellular location">
    <subcellularLocation>
        <location>Secreted</location>
        <location>Extracellular space</location>
    </subcellularLocation>
</comment>
<comment type="similarity">
    <text evidence="1">Belongs to the peptidase S1 family.</text>
</comment>
<evidence type="ECO:0000255" key="1">
    <source>
        <dbReference type="PROSITE-ProRule" id="PRU00274"/>
    </source>
</evidence>
<evidence type="ECO:0000255" key="2">
    <source>
        <dbReference type="PROSITE-ProRule" id="PRU10078"/>
    </source>
</evidence>
<evidence type="ECO:0000255" key="3">
    <source>
        <dbReference type="PROSITE-ProRule" id="PRU10079"/>
    </source>
</evidence>
<evidence type="ECO:0000269" key="4">
    <source>
    </source>
</evidence>
<evidence type="ECO:0000269" key="5">
    <source>
    </source>
</evidence>
<keyword id="KW-0903">Direct protein sequencing</keyword>
<keyword id="KW-1015">Disulfide bond</keyword>
<keyword id="KW-0378">Hydrolase</keyword>
<keyword id="KW-0645">Protease</keyword>
<keyword id="KW-0964">Secreted</keyword>
<keyword id="KW-0720">Serine protease</keyword>
<dbReference type="EC" id="3.4.21.1"/>
<dbReference type="PIR" id="A00954">
    <property type="entry name" value="KYVH2O"/>
</dbReference>
<dbReference type="SMR" id="P00768"/>
<dbReference type="MEROPS" id="S01.438"/>
<dbReference type="GO" id="GO:0005576">
    <property type="term" value="C:extracellular region"/>
    <property type="evidence" value="ECO:0007669"/>
    <property type="project" value="UniProtKB-SubCell"/>
</dbReference>
<dbReference type="GO" id="GO:0004252">
    <property type="term" value="F:serine-type endopeptidase activity"/>
    <property type="evidence" value="ECO:0007669"/>
    <property type="project" value="UniProtKB-EC"/>
</dbReference>
<dbReference type="GO" id="GO:0006508">
    <property type="term" value="P:proteolysis"/>
    <property type="evidence" value="ECO:0007669"/>
    <property type="project" value="UniProtKB-KW"/>
</dbReference>
<dbReference type="CDD" id="cd00190">
    <property type="entry name" value="Tryp_SPc"/>
    <property type="match status" value="1"/>
</dbReference>
<dbReference type="FunFam" id="2.40.10.10:FF:000047">
    <property type="entry name" value="Trypsin eta"/>
    <property type="match status" value="1"/>
</dbReference>
<dbReference type="Gene3D" id="2.40.10.10">
    <property type="entry name" value="Trypsin-like serine proteases"/>
    <property type="match status" value="2"/>
</dbReference>
<dbReference type="InterPro" id="IPR050430">
    <property type="entry name" value="Peptidase_S1"/>
</dbReference>
<dbReference type="InterPro" id="IPR009003">
    <property type="entry name" value="Peptidase_S1_PA"/>
</dbReference>
<dbReference type="InterPro" id="IPR043504">
    <property type="entry name" value="Peptidase_S1_PA_chymotrypsin"/>
</dbReference>
<dbReference type="InterPro" id="IPR001314">
    <property type="entry name" value="Peptidase_S1A"/>
</dbReference>
<dbReference type="InterPro" id="IPR001254">
    <property type="entry name" value="Trypsin_dom"/>
</dbReference>
<dbReference type="InterPro" id="IPR018114">
    <property type="entry name" value="TRYPSIN_HIS"/>
</dbReference>
<dbReference type="InterPro" id="IPR033116">
    <property type="entry name" value="TRYPSIN_SER"/>
</dbReference>
<dbReference type="PANTHER" id="PTHR24276:SF98">
    <property type="entry name" value="FI18310P1-RELATED"/>
    <property type="match status" value="1"/>
</dbReference>
<dbReference type="PANTHER" id="PTHR24276">
    <property type="entry name" value="POLYSERASE-RELATED"/>
    <property type="match status" value="1"/>
</dbReference>
<dbReference type="Pfam" id="PF00089">
    <property type="entry name" value="Trypsin"/>
    <property type="match status" value="1"/>
</dbReference>
<dbReference type="PRINTS" id="PR00722">
    <property type="entry name" value="CHYMOTRYPSIN"/>
</dbReference>
<dbReference type="SMART" id="SM00020">
    <property type="entry name" value="Tryp_SPc"/>
    <property type="match status" value="1"/>
</dbReference>
<dbReference type="SUPFAM" id="SSF50494">
    <property type="entry name" value="Trypsin-like serine proteases"/>
    <property type="match status" value="1"/>
</dbReference>
<dbReference type="PROSITE" id="PS50240">
    <property type="entry name" value="TRYPSIN_DOM"/>
    <property type="match status" value="1"/>
</dbReference>
<dbReference type="PROSITE" id="PS00134">
    <property type="entry name" value="TRYPSIN_HIS"/>
    <property type="match status" value="1"/>
</dbReference>
<dbReference type="PROSITE" id="PS00135">
    <property type="entry name" value="TRYPSIN_SER"/>
    <property type="match status" value="1"/>
</dbReference>
<proteinExistence type="evidence at protein level"/>
<organism>
    <name type="scientific">Vespa orientalis</name>
    <name type="common">Oriental hornet</name>
    <dbReference type="NCBI Taxonomy" id="7447"/>
    <lineage>
        <taxon>Eukaryota</taxon>
        <taxon>Metazoa</taxon>
        <taxon>Ecdysozoa</taxon>
        <taxon>Arthropoda</taxon>
        <taxon>Hexapoda</taxon>
        <taxon>Insecta</taxon>
        <taxon>Pterygota</taxon>
        <taxon>Neoptera</taxon>
        <taxon>Endopterygota</taxon>
        <taxon>Hymenoptera</taxon>
        <taxon>Apocrita</taxon>
        <taxon>Aculeata</taxon>
        <taxon>Vespoidea</taxon>
        <taxon>Vespidae</taxon>
        <taxon>Vespinae</taxon>
        <taxon>Vespa</taxon>
    </lineage>
</organism>
<sequence length="216" mass="23471">IVGGTNAPRGKYPYQVSLRAPKHFCGGSISKRYVLTAAHCLVGKSEHQVTVGSVLLNKEEAVYNAKELIVNKNYNSIRLINDIGLIRVSKDISFTQLVQPVKLPVSNTIKAGDPVVLTGWGRIYVNGPIPNNLQQITLSIVNQQTCKSKHWGLTDSQICTFTKRGEGACHGDSGGPLVANGVQIGIVSYGHPCAIGSPNVFTRVYSFLDWIQKNQL</sequence>
<protein>
    <recommendedName>
        <fullName>Chymotrypsin-2</fullName>
        <ecNumber>3.4.21.1</ecNumber>
    </recommendedName>
    <alternativeName>
        <fullName>Chymotrypsin II</fullName>
    </alternativeName>
</protein>
<name>CTR2_VESOR</name>